<name>CHLB_CIBSC</name>
<comment type="function">
    <text evidence="1">Component of the dark-operative protochlorophyllide reductase (DPOR) that uses Mg-ATP and reduced ferredoxin to reduce ring D of protochlorophyllide (Pchlide) to form chlorophyllide a (Chlide). This reaction is light-independent. The NB-protein (ChlN-ChlB) is the catalytic component of the complex (By similarity).</text>
</comment>
<comment type="catalytic activity">
    <reaction>
        <text>chlorophyllide a + oxidized 2[4Fe-4S]-[ferredoxin] + 2 ADP + 2 phosphate = protochlorophyllide a + reduced 2[4Fe-4S]-[ferredoxin] + 2 ATP + 2 H2O</text>
        <dbReference type="Rhea" id="RHEA:28202"/>
        <dbReference type="Rhea" id="RHEA-COMP:10002"/>
        <dbReference type="Rhea" id="RHEA-COMP:10004"/>
        <dbReference type="ChEBI" id="CHEBI:15377"/>
        <dbReference type="ChEBI" id="CHEBI:30616"/>
        <dbReference type="ChEBI" id="CHEBI:33722"/>
        <dbReference type="ChEBI" id="CHEBI:33723"/>
        <dbReference type="ChEBI" id="CHEBI:43474"/>
        <dbReference type="ChEBI" id="CHEBI:83348"/>
        <dbReference type="ChEBI" id="CHEBI:83350"/>
        <dbReference type="ChEBI" id="CHEBI:456216"/>
        <dbReference type="EC" id="1.3.7.7"/>
    </reaction>
</comment>
<comment type="cofactor">
    <cofactor evidence="1">
        <name>[4Fe-4S] cluster</name>
        <dbReference type="ChEBI" id="CHEBI:49883"/>
    </cofactor>
    <text evidence="1">Binds 1 [4Fe-4S] cluster per heterodimer. The cluster is bound at the heterodimer interface by residues from both subunits.</text>
</comment>
<comment type="pathway">
    <text>Porphyrin-containing compound metabolism; chlorophyll biosynthesis (light-independent).</text>
</comment>
<comment type="subunit">
    <text evidence="1">Protochlorophyllide reductase is composed of three subunits; ChlL, ChlN and ChlB. Forms a heterotetramer of two ChlB and two ChlN subunits (By similarity).</text>
</comment>
<comment type="subcellular location">
    <subcellularLocation>
        <location>Plastid</location>
        <location>Chloroplast</location>
    </subcellularLocation>
</comment>
<comment type="similarity">
    <text evidence="2">Belongs to the ChlB/BchB/BchZ family.</text>
</comment>
<accession>Q32067</accession>
<dbReference type="EC" id="1.3.7.7"/>
<dbReference type="EMBL" id="U21311">
    <property type="protein sequence ID" value="AAC49428.1"/>
    <property type="molecule type" value="Genomic_DNA"/>
</dbReference>
<dbReference type="SMR" id="Q32067"/>
<dbReference type="UniPathway" id="UPA00670"/>
<dbReference type="GO" id="GO:0009507">
    <property type="term" value="C:chloroplast"/>
    <property type="evidence" value="ECO:0007669"/>
    <property type="project" value="UniProtKB-SubCell"/>
</dbReference>
<dbReference type="GO" id="GO:0051539">
    <property type="term" value="F:4 iron, 4 sulfur cluster binding"/>
    <property type="evidence" value="ECO:0007669"/>
    <property type="project" value="UniProtKB-KW"/>
</dbReference>
<dbReference type="GO" id="GO:0005524">
    <property type="term" value="F:ATP binding"/>
    <property type="evidence" value="ECO:0007669"/>
    <property type="project" value="UniProtKB-KW"/>
</dbReference>
<dbReference type="GO" id="GO:0046872">
    <property type="term" value="F:metal ion binding"/>
    <property type="evidence" value="ECO:0007669"/>
    <property type="project" value="UniProtKB-KW"/>
</dbReference>
<dbReference type="GO" id="GO:0016491">
    <property type="term" value="F:oxidoreductase activity"/>
    <property type="evidence" value="ECO:0007669"/>
    <property type="project" value="UniProtKB-KW"/>
</dbReference>
<dbReference type="GO" id="GO:0036068">
    <property type="term" value="P:light-independent chlorophyll biosynthetic process"/>
    <property type="evidence" value="ECO:0007669"/>
    <property type="project" value="UniProtKB-UniPathway"/>
</dbReference>
<dbReference type="GO" id="GO:0015979">
    <property type="term" value="P:photosynthesis"/>
    <property type="evidence" value="ECO:0007669"/>
    <property type="project" value="UniProtKB-KW"/>
</dbReference>
<dbReference type="Gene3D" id="3.40.50.1980">
    <property type="entry name" value="Nitrogenase molybdenum iron protein domain"/>
    <property type="match status" value="1"/>
</dbReference>
<dbReference type="InterPro" id="IPR050152">
    <property type="entry name" value="ChlB/BchB/BchZ"/>
</dbReference>
<dbReference type="InterPro" id="IPR000510">
    <property type="entry name" value="Nase/OxRdtase_comp1"/>
</dbReference>
<dbReference type="PANTHER" id="PTHR33712">
    <property type="entry name" value="LIGHT-INDEPENDENT PROTOCHLOROPHYLLIDE REDUCTASE SUBUNIT B"/>
    <property type="match status" value="1"/>
</dbReference>
<dbReference type="PANTHER" id="PTHR33712:SF7">
    <property type="entry name" value="LIGHT-INDEPENDENT PROTOCHLOROPHYLLIDE REDUCTASE SUBUNIT B"/>
    <property type="match status" value="1"/>
</dbReference>
<dbReference type="Pfam" id="PF00148">
    <property type="entry name" value="Oxidored_nitro"/>
    <property type="match status" value="1"/>
</dbReference>
<dbReference type="SUPFAM" id="SSF53807">
    <property type="entry name" value="Helical backbone' metal receptor"/>
    <property type="match status" value="1"/>
</dbReference>
<organism>
    <name type="scientific">Cibotium schiedei</name>
    <name type="common">Mexican tree fern</name>
    <dbReference type="NCBI Taxonomy" id="38493"/>
    <lineage>
        <taxon>Eukaryota</taxon>
        <taxon>Viridiplantae</taxon>
        <taxon>Streptophyta</taxon>
        <taxon>Embryophyta</taxon>
        <taxon>Tracheophyta</taxon>
        <taxon>Polypodiopsida</taxon>
        <taxon>Polypodiidae</taxon>
        <taxon>Cyatheales</taxon>
        <taxon>Cibotiaceae</taxon>
        <taxon>Cibotium</taxon>
    </lineage>
</organism>
<keyword id="KW-0004">4Fe-4S</keyword>
<keyword id="KW-0067">ATP-binding</keyword>
<keyword id="KW-0149">Chlorophyll biosynthesis</keyword>
<keyword id="KW-0150">Chloroplast</keyword>
<keyword id="KW-0408">Iron</keyword>
<keyword id="KW-0411">Iron-sulfur</keyword>
<keyword id="KW-0479">Metal-binding</keyword>
<keyword id="KW-0547">Nucleotide-binding</keyword>
<keyword id="KW-0560">Oxidoreductase</keyword>
<keyword id="KW-0602">Photosynthesis</keyword>
<keyword id="KW-0934">Plastid</keyword>
<evidence type="ECO:0000250" key="1"/>
<evidence type="ECO:0000305" key="2"/>
<gene>
    <name type="primary">chlB</name>
</gene>
<feature type="chain" id="PRO_0000219819" description="Light-independent protochlorophyllide reductase subunit B">
    <location>
        <begin position="1" status="less than"/>
        <end position="103" status="greater than"/>
    </location>
</feature>
<feature type="non-terminal residue">
    <location>
        <position position="1"/>
    </location>
</feature>
<feature type="non-terminal residue">
    <location>
        <position position="103"/>
    </location>
</feature>
<sequence length="103" mass="11785">KRSLRDLGIPVNQIIPEGGSLKYLKDLPRAWFNIVPYREVGLMTAIFLEKKYGMPYVSVTPMGILDTAEFIAQMEKLVNAWASVLSKEKVNYISYIKNQTQFV</sequence>
<geneLocation type="chloroplast"/>
<reference key="1">
    <citation type="journal article" date="1996" name="Mol. Phylogenet. Evol.">
        <title>Phylogenetic inferences from chloroplast chlB gene sequences of Nephrolepis exaltata (Filicopsida), Ephedra altissima (Gnetopsida), and diverse land plants.</title>
        <authorList>
            <person name="Boivin R."/>
            <person name="Richard M."/>
            <person name="Beauseigle D."/>
            <person name="Bousquet J."/>
            <person name="Bellemare G."/>
        </authorList>
    </citation>
    <scope>NUCLEOTIDE SEQUENCE [GENOMIC DNA]</scope>
</reference>
<proteinExistence type="inferred from homology"/>
<protein>
    <recommendedName>
        <fullName>Light-independent protochlorophyllide reductase subunit B</fullName>
        <shortName>DPOR subunit B</shortName>
        <shortName>LI-POR subunit B</shortName>
        <ecNumber>1.3.7.7</ecNumber>
    </recommendedName>
</protein>